<gene>
    <name evidence="1" type="primary">obg</name>
    <name type="ordered locus">Ping_0527</name>
</gene>
<comment type="function">
    <text evidence="1">An essential GTPase which binds GTP, GDP and possibly (p)ppGpp with moderate affinity, with high nucleotide exchange rates and a fairly low GTP hydrolysis rate. Plays a role in control of the cell cycle, stress response, ribosome biogenesis and in those bacteria that undergo differentiation, in morphogenesis control.</text>
</comment>
<comment type="cofactor">
    <cofactor evidence="1">
        <name>Mg(2+)</name>
        <dbReference type="ChEBI" id="CHEBI:18420"/>
    </cofactor>
</comment>
<comment type="subunit">
    <text evidence="1">Monomer.</text>
</comment>
<comment type="subcellular location">
    <subcellularLocation>
        <location evidence="1">Cytoplasm</location>
    </subcellularLocation>
</comment>
<comment type="similarity">
    <text evidence="1">Belongs to the TRAFAC class OBG-HflX-like GTPase superfamily. OBG GTPase family.</text>
</comment>
<keyword id="KW-0963">Cytoplasm</keyword>
<keyword id="KW-0342">GTP-binding</keyword>
<keyword id="KW-0378">Hydrolase</keyword>
<keyword id="KW-0460">Magnesium</keyword>
<keyword id="KW-0479">Metal-binding</keyword>
<keyword id="KW-0547">Nucleotide-binding</keyword>
<keyword id="KW-1185">Reference proteome</keyword>
<accession>A1SSB6</accession>
<dbReference type="EC" id="3.6.5.-" evidence="1"/>
<dbReference type="EMBL" id="CP000510">
    <property type="protein sequence ID" value="ABM02381.1"/>
    <property type="molecule type" value="Genomic_DNA"/>
</dbReference>
<dbReference type="RefSeq" id="WP_011768940.1">
    <property type="nucleotide sequence ID" value="NC_008709.1"/>
</dbReference>
<dbReference type="SMR" id="A1SSB6"/>
<dbReference type="STRING" id="357804.Ping_0527"/>
<dbReference type="KEGG" id="pin:Ping_0527"/>
<dbReference type="eggNOG" id="COG0536">
    <property type="taxonomic scope" value="Bacteria"/>
</dbReference>
<dbReference type="HOGENOM" id="CLU_011747_2_0_6"/>
<dbReference type="OrthoDB" id="9807318at2"/>
<dbReference type="Proteomes" id="UP000000639">
    <property type="component" value="Chromosome"/>
</dbReference>
<dbReference type="GO" id="GO:0005737">
    <property type="term" value="C:cytoplasm"/>
    <property type="evidence" value="ECO:0007669"/>
    <property type="project" value="UniProtKB-SubCell"/>
</dbReference>
<dbReference type="GO" id="GO:0005525">
    <property type="term" value="F:GTP binding"/>
    <property type="evidence" value="ECO:0007669"/>
    <property type="project" value="UniProtKB-UniRule"/>
</dbReference>
<dbReference type="GO" id="GO:0003924">
    <property type="term" value="F:GTPase activity"/>
    <property type="evidence" value="ECO:0007669"/>
    <property type="project" value="UniProtKB-UniRule"/>
</dbReference>
<dbReference type="GO" id="GO:0000287">
    <property type="term" value="F:magnesium ion binding"/>
    <property type="evidence" value="ECO:0007669"/>
    <property type="project" value="InterPro"/>
</dbReference>
<dbReference type="GO" id="GO:0042254">
    <property type="term" value="P:ribosome biogenesis"/>
    <property type="evidence" value="ECO:0007669"/>
    <property type="project" value="UniProtKB-UniRule"/>
</dbReference>
<dbReference type="CDD" id="cd01898">
    <property type="entry name" value="Obg"/>
    <property type="match status" value="1"/>
</dbReference>
<dbReference type="FunFam" id="2.70.210.12:FF:000001">
    <property type="entry name" value="GTPase Obg"/>
    <property type="match status" value="1"/>
</dbReference>
<dbReference type="Gene3D" id="2.70.210.12">
    <property type="entry name" value="GTP1/OBG domain"/>
    <property type="match status" value="1"/>
</dbReference>
<dbReference type="Gene3D" id="3.40.50.300">
    <property type="entry name" value="P-loop containing nucleotide triphosphate hydrolases"/>
    <property type="match status" value="1"/>
</dbReference>
<dbReference type="HAMAP" id="MF_01454">
    <property type="entry name" value="GTPase_Obg"/>
    <property type="match status" value="1"/>
</dbReference>
<dbReference type="InterPro" id="IPR031167">
    <property type="entry name" value="G_OBG"/>
</dbReference>
<dbReference type="InterPro" id="IPR006073">
    <property type="entry name" value="GTP-bd"/>
</dbReference>
<dbReference type="InterPro" id="IPR014100">
    <property type="entry name" value="GTP-bd_Obg/CgtA"/>
</dbReference>
<dbReference type="InterPro" id="IPR006074">
    <property type="entry name" value="GTP1-OBG_CS"/>
</dbReference>
<dbReference type="InterPro" id="IPR006169">
    <property type="entry name" value="GTP1_OBG_dom"/>
</dbReference>
<dbReference type="InterPro" id="IPR036726">
    <property type="entry name" value="GTP1_OBG_dom_sf"/>
</dbReference>
<dbReference type="InterPro" id="IPR045086">
    <property type="entry name" value="OBG_GTPase"/>
</dbReference>
<dbReference type="InterPro" id="IPR027417">
    <property type="entry name" value="P-loop_NTPase"/>
</dbReference>
<dbReference type="NCBIfam" id="TIGR02729">
    <property type="entry name" value="Obg_CgtA"/>
    <property type="match status" value="1"/>
</dbReference>
<dbReference type="NCBIfam" id="NF008955">
    <property type="entry name" value="PRK12297.1"/>
    <property type="match status" value="1"/>
</dbReference>
<dbReference type="NCBIfam" id="NF008956">
    <property type="entry name" value="PRK12299.1"/>
    <property type="match status" value="1"/>
</dbReference>
<dbReference type="PANTHER" id="PTHR11702">
    <property type="entry name" value="DEVELOPMENTALLY REGULATED GTP-BINDING PROTEIN-RELATED"/>
    <property type="match status" value="1"/>
</dbReference>
<dbReference type="PANTHER" id="PTHR11702:SF31">
    <property type="entry name" value="MITOCHONDRIAL RIBOSOME-ASSOCIATED GTPASE 2"/>
    <property type="match status" value="1"/>
</dbReference>
<dbReference type="Pfam" id="PF01018">
    <property type="entry name" value="GTP1_OBG"/>
    <property type="match status" value="1"/>
</dbReference>
<dbReference type="Pfam" id="PF01926">
    <property type="entry name" value="MMR_HSR1"/>
    <property type="match status" value="1"/>
</dbReference>
<dbReference type="PIRSF" id="PIRSF002401">
    <property type="entry name" value="GTP_bd_Obg/CgtA"/>
    <property type="match status" value="1"/>
</dbReference>
<dbReference type="PRINTS" id="PR00326">
    <property type="entry name" value="GTP1OBG"/>
</dbReference>
<dbReference type="SUPFAM" id="SSF82051">
    <property type="entry name" value="Obg GTP-binding protein N-terminal domain"/>
    <property type="match status" value="1"/>
</dbReference>
<dbReference type="SUPFAM" id="SSF52540">
    <property type="entry name" value="P-loop containing nucleoside triphosphate hydrolases"/>
    <property type="match status" value="1"/>
</dbReference>
<dbReference type="PROSITE" id="PS51710">
    <property type="entry name" value="G_OBG"/>
    <property type="match status" value="1"/>
</dbReference>
<dbReference type="PROSITE" id="PS00905">
    <property type="entry name" value="GTP1_OBG"/>
    <property type="match status" value="1"/>
</dbReference>
<dbReference type="PROSITE" id="PS51883">
    <property type="entry name" value="OBG"/>
    <property type="match status" value="1"/>
</dbReference>
<evidence type="ECO:0000255" key="1">
    <source>
        <dbReference type="HAMAP-Rule" id="MF_01454"/>
    </source>
</evidence>
<evidence type="ECO:0000255" key="2">
    <source>
        <dbReference type="PROSITE-ProRule" id="PRU01231"/>
    </source>
</evidence>
<proteinExistence type="inferred from homology"/>
<protein>
    <recommendedName>
        <fullName evidence="1">GTPase Obg</fullName>
        <ecNumber evidence="1">3.6.5.-</ecNumber>
    </recommendedName>
    <alternativeName>
        <fullName evidence="1">GTP-binding protein Obg</fullName>
    </alternativeName>
</protein>
<feature type="chain" id="PRO_0000386168" description="GTPase Obg">
    <location>
        <begin position="1"/>
        <end position="386"/>
    </location>
</feature>
<feature type="domain" description="Obg" evidence="2">
    <location>
        <begin position="1"/>
        <end position="159"/>
    </location>
</feature>
<feature type="domain" description="OBG-type G" evidence="1">
    <location>
        <begin position="160"/>
        <end position="333"/>
    </location>
</feature>
<feature type="binding site" evidence="1">
    <location>
        <begin position="166"/>
        <end position="173"/>
    </location>
    <ligand>
        <name>GTP</name>
        <dbReference type="ChEBI" id="CHEBI:37565"/>
    </ligand>
</feature>
<feature type="binding site" evidence="1">
    <location>
        <position position="173"/>
    </location>
    <ligand>
        <name>Mg(2+)</name>
        <dbReference type="ChEBI" id="CHEBI:18420"/>
    </ligand>
</feature>
<feature type="binding site" evidence="1">
    <location>
        <begin position="191"/>
        <end position="195"/>
    </location>
    <ligand>
        <name>GTP</name>
        <dbReference type="ChEBI" id="CHEBI:37565"/>
    </ligand>
</feature>
<feature type="binding site" evidence="1">
    <location>
        <position position="193"/>
    </location>
    <ligand>
        <name>Mg(2+)</name>
        <dbReference type="ChEBI" id="CHEBI:18420"/>
    </ligand>
</feature>
<feature type="binding site" evidence="1">
    <location>
        <begin position="213"/>
        <end position="216"/>
    </location>
    <ligand>
        <name>GTP</name>
        <dbReference type="ChEBI" id="CHEBI:37565"/>
    </ligand>
</feature>
<feature type="binding site" evidence="1">
    <location>
        <begin position="283"/>
        <end position="286"/>
    </location>
    <ligand>
        <name>GTP</name>
        <dbReference type="ChEBI" id="CHEBI:37565"/>
    </ligand>
</feature>
<feature type="binding site" evidence="1">
    <location>
        <begin position="314"/>
        <end position="316"/>
    </location>
    <ligand>
        <name>GTP</name>
        <dbReference type="ChEBI" id="CHEBI:37565"/>
    </ligand>
</feature>
<organism>
    <name type="scientific">Psychromonas ingrahamii (strain DSM 17664 / CCUG 51855 / 37)</name>
    <dbReference type="NCBI Taxonomy" id="357804"/>
    <lineage>
        <taxon>Bacteria</taxon>
        <taxon>Pseudomonadati</taxon>
        <taxon>Pseudomonadota</taxon>
        <taxon>Gammaproteobacteria</taxon>
        <taxon>Alteromonadales</taxon>
        <taxon>Psychromonadaceae</taxon>
        <taxon>Psychromonas</taxon>
    </lineage>
</organism>
<name>OBG_PSYIN</name>
<sequence>MKFVDEAKIKVDAGDGGNGCIGFRTEKYIPRGGPNGGDGGDGGDVYLQADENLNTLVDFRFVRFYDAERGENGQTRDCTGSRGKDKIIQVPVGTRCRDADTGEVLGDLTRDGQQLMVAKGGFHGLGNARFKSSTNRAPRQKTDGTPGEVRNLLLELLLLADVGMLGLPNAGKSTFIRSVSAAKPKVADYPFTTLVPNLGVVSMGYGRSFVIADIPGLIEGASDGAGLGARFLRHLERCRVLLHTIDLLPADGSDPAENALVIIAELKKHSPKLASKPRWLVFNKTDLLLEDEAELVIERVKEALEWDGPVYKVAAISKTGTDTLCRDVVEYLEELPAEFTPEEERQQVEFQWDDYHKTAIEELDDDSDDDDWSEDDEMMEVIYTKE</sequence>
<reference key="1">
    <citation type="journal article" date="2008" name="BMC Genomics">
        <title>Genomics of an extreme psychrophile, Psychromonas ingrahamii.</title>
        <authorList>
            <person name="Riley M."/>
            <person name="Staley J.T."/>
            <person name="Danchin A."/>
            <person name="Wang T.Z."/>
            <person name="Brettin T.S."/>
            <person name="Hauser L.J."/>
            <person name="Land M.L."/>
            <person name="Thompson L.S."/>
        </authorList>
    </citation>
    <scope>NUCLEOTIDE SEQUENCE [LARGE SCALE GENOMIC DNA]</scope>
    <source>
        <strain>DSM 17664 / CCUG 51855 / 37</strain>
    </source>
</reference>